<name>ENO_NATPD</name>
<sequence>MTLITEVRLRKILDSRGNPTVEAEVRTENGGFGRGAAPSGASTGEYEAVERPAEEAIAQARELAVPRIEGQVYAGDQRGVDNALHGADGTDDFSEIGANSAVAISMAAAKAAADVLGAPLYQHLGGAFRGRDFPVPLGNVIGGGEHAADATHIQEFLAAPVGAPSVADAVFANAKVHGEVQRQLDERGVPAAKGDEGAWAPSIDDSEAFEIMEEAIAAVEDEVGFEIRFGLDVAGAELYEDGVYHYGDETRSPDEQVAYIADLVEEYNLVYVEDPLDEDDFSGFAELTERVGDRTLICGDDLFVTNTERLQRGIDDGAANSILIKPNQIGTLSDAFDAIELATRNGYDPVVSHRSGETEDTTIAHLAVATDAPFIKTGAVGGERTAKLNELIRIEANA</sequence>
<protein>
    <recommendedName>
        <fullName evidence="1">Enolase</fullName>
        <ecNumber evidence="1">4.2.1.11</ecNumber>
    </recommendedName>
    <alternativeName>
        <fullName evidence="1">2-phospho-D-glycerate hydro-lyase</fullName>
    </alternativeName>
    <alternativeName>
        <fullName evidence="1">2-phosphoglycerate dehydratase</fullName>
    </alternativeName>
</protein>
<dbReference type="EC" id="4.2.1.11" evidence="1"/>
<dbReference type="EMBL" id="CR936257">
    <property type="protein sequence ID" value="CAI49514.1"/>
    <property type="molecule type" value="Genomic_DNA"/>
</dbReference>
<dbReference type="RefSeq" id="WP_011323139.1">
    <property type="nucleotide sequence ID" value="NC_007426.1"/>
</dbReference>
<dbReference type="SMR" id="Q3IQT0"/>
<dbReference type="STRING" id="348780.NP_2846A"/>
<dbReference type="EnsemblBacteria" id="CAI49514">
    <property type="protein sequence ID" value="CAI49514"/>
    <property type="gene ID" value="NP_2846A"/>
</dbReference>
<dbReference type="GeneID" id="3702674"/>
<dbReference type="KEGG" id="nph:NP_2846A"/>
<dbReference type="eggNOG" id="arCOG01169">
    <property type="taxonomic scope" value="Archaea"/>
</dbReference>
<dbReference type="HOGENOM" id="CLU_031223_0_1_2"/>
<dbReference type="OrthoDB" id="8680at2157"/>
<dbReference type="UniPathway" id="UPA00109">
    <property type="reaction ID" value="UER00187"/>
</dbReference>
<dbReference type="Proteomes" id="UP000002698">
    <property type="component" value="Chromosome"/>
</dbReference>
<dbReference type="GO" id="GO:0009986">
    <property type="term" value="C:cell surface"/>
    <property type="evidence" value="ECO:0007669"/>
    <property type="project" value="UniProtKB-SubCell"/>
</dbReference>
<dbReference type="GO" id="GO:0005576">
    <property type="term" value="C:extracellular region"/>
    <property type="evidence" value="ECO:0007669"/>
    <property type="project" value="UniProtKB-SubCell"/>
</dbReference>
<dbReference type="GO" id="GO:0000015">
    <property type="term" value="C:phosphopyruvate hydratase complex"/>
    <property type="evidence" value="ECO:0007669"/>
    <property type="project" value="InterPro"/>
</dbReference>
<dbReference type="GO" id="GO:0000287">
    <property type="term" value="F:magnesium ion binding"/>
    <property type="evidence" value="ECO:0007669"/>
    <property type="project" value="UniProtKB-UniRule"/>
</dbReference>
<dbReference type="GO" id="GO:0004634">
    <property type="term" value="F:phosphopyruvate hydratase activity"/>
    <property type="evidence" value="ECO:0007669"/>
    <property type="project" value="UniProtKB-UniRule"/>
</dbReference>
<dbReference type="GO" id="GO:0006096">
    <property type="term" value="P:glycolytic process"/>
    <property type="evidence" value="ECO:0007669"/>
    <property type="project" value="UniProtKB-UniRule"/>
</dbReference>
<dbReference type="CDD" id="cd03313">
    <property type="entry name" value="enolase"/>
    <property type="match status" value="1"/>
</dbReference>
<dbReference type="Gene3D" id="3.20.20.120">
    <property type="entry name" value="Enolase-like C-terminal domain"/>
    <property type="match status" value="1"/>
</dbReference>
<dbReference type="Gene3D" id="3.30.390.10">
    <property type="entry name" value="Enolase-like, N-terminal domain"/>
    <property type="match status" value="1"/>
</dbReference>
<dbReference type="HAMAP" id="MF_00318">
    <property type="entry name" value="Enolase"/>
    <property type="match status" value="1"/>
</dbReference>
<dbReference type="InterPro" id="IPR000941">
    <property type="entry name" value="Enolase"/>
</dbReference>
<dbReference type="InterPro" id="IPR036849">
    <property type="entry name" value="Enolase-like_C_sf"/>
</dbReference>
<dbReference type="InterPro" id="IPR029017">
    <property type="entry name" value="Enolase-like_N"/>
</dbReference>
<dbReference type="InterPro" id="IPR020810">
    <property type="entry name" value="Enolase_C"/>
</dbReference>
<dbReference type="InterPro" id="IPR020809">
    <property type="entry name" value="Enolase_CS"/>
</dbReference>
<dbReference type="InterPro" id="IPR020811">
    <property type="entry name" value="Enolase_N"/>
</dbReference>
<dbReference type="NCBIfam" id="TIGR01060">
    <property type="entry name" value="eno"/>
    <property type="match status" value="1"/>
</dbReference>
<dbReference type="PANTHER" id="PTHR11902">
    <property type="entry name" value="ENOLASE"/>
    <property type="match status" value="1"/>
</dbReference>
<dbReference type="PANTHER" id="PTHR11902:SF1">
    <property type="entry name" value="ENOLASE"/>
    <property type="match status" value="1"/>
</dbReference>
<dbReference type="Pfam" id="PF00113">
    <property type="entry name" value="Enolase_C"/>
    <property type="match status" value="1"/>
</dbReference>
<dbReference type="Pfam" id="PF03952">
    <property type="entry name" value="Enolase_N"/>
    <property type="match status" value="1"/>
</dbReference>
<dbReference type="PIRSF" id="PIRSF001400">
    <property type="entry name" value="Enolase"/>
    <property type="match status" value="1"/>
</dbReference>
<dbReference type="PRINTS" id="PR00148">
    <property type="entry name" value="ENOLASE"/>
</dbReference>
<dbReference type="SFLD" id="SFLDS00001">
    <property type="entry name" value="Enolase"/>
    <property type="match status" value="1"/>
</dbReference>
<dbReference type="SFLD" id="SFLDF00002">
    <property type="entry name" value="enolase"/>
    <property type="match status" value="1"/>
</dbReference>
<dbReference type="SMART" id="SM01192">
    <property type="entry name" value="Enolase_C"/>
    <property type="match status" value="1"/>
</dbReference>
<dbReference type="SMART" id="SM01193">
    <property type="entry name" value="Enolase_N"/>
    <property type="match status" value="1"/>
</dbReference>
<dbReference type="SUPFAM" id="SSF51604">
    <property type="entry name" value="Enolase C-terminal domain-like"/>
    <property type="match status" value="1"/>
</dbReference>
<dbReference type="SUPFAM" id="SSF54826">
    <property type="entry name" value="Enolase N-terminal domain-like"/>
    <property type="match status" value="1"/>
</dbReference>
<dbReference type="PROSITE" id="PS00164">
    <property type="entry name" value="ENOLASE"/>
    <property type="match status" value="1"/>
</dbReference>
<feature type="chain" id="PRO_0000267147" description="Enolase">
    <location>
        <begin position="1"/>
        <end position="398"/>
    </location>
</feature>
<feature type="active site" description="Proton donor" evidence="1">
    <location>
        <position position="196"/>
    </location>
</feature>
<feature type="active site" description="Proton acceptor" evidence="1">
    <location>
        <position position="325"/>
    </location>
</feature>
<feature type="binding site" evidence="1">
    <location>
        <position position="154"/>
    </location>
    <ligand>
        <name>(2R)-2-phosphoglycerate</name>
        <dbReference type="ChEBI" id="CHEBI:58289"/>
    </ligand>
</feature>
<feature type="binding site" evidence="1">
    <location>
        <position position="232"/>
    </location>
    <ligand>
        <name>Mg(2+)</name>
        <dbReference type="ChEBI" id="CHEBI:18420"/>
    </ligand>
</feature>
<feature type="binding site" evidence="1">
    <location>
        <position position="273"/>
    </location>
    <ligand>
        <name>Mg(2+)</name>
        <dbReference type="ChEBI" id="CHEBI:18420"/>
    </ligand>
</feature>
<feature type="binding site" evidence="1">
    <location>
        <position position="300"/>
    </location>
    <ligand>
        <name>Mg(2+)</name>
        <dbReference type="ChEBI" id="CHEBI:18420"/>
    </ligand>
</feature>
<feature type="binding site" evidence="1">
    <location>
        <position position="325"/>
    </location>
    <ligand>
        <name>(2R)-2-phosphoglycerate</name>
        <dbReference type="ChEBI" id="CHEBI:58289"/>
    </ligand>
</feature>
<feature type="binding site" evidence="1">
    <location>
        <position position="354"/>
    </location>
    <ligand>
        <name>(2R)-2-phosphoglycerate</name>
        <dbReference type="ChEBI" id="CHEBI:58289"/>
    </ligand>
</feature>
<feature type="binding site" evidence="1">
    <location>
        <position position="355"/>
    </location>
    <ligand>
        <name>(2R)-2-phosphoglycerate</name>
        <dbReference type="ChEBI" id="CHEBI:58289"/>
    </ligand>
</feature>
<feature type="binding site" evidence="1">
    <location>
        <position position="376"/>
    </location>
    <ligand>
        <name>(2R)-2-phosphoglycerate</name>
        <dbReference type="ChEBI" id="CHEBI:58289"/>
    </ligand>
</feature>
<organism>
    <name type="scientific">Natronomonas pharaonis (strain ATCC 35678 / DSM 2160 / CIP 103997 / JCM 8858 / NBRC 14720 / NCIMB 2260 / Gabara)</name>
    <name type="common">Halobacterium pharaonis</name>
    <dbReference type="NCBI Taxonomy" id="348780"/>
    <lineage>
        <taxon>Archaea</taxon>
        <taxon>Methanobacteriati</taxon>
        <taxon>Methanobacteriota</taxon>
        <taxon>Stenosarchaea group</taxon>
        <taxon>Halobacteria</taxon>
        <taxon>Halobacteriales</taxon>
        <taxon>Haloarculaceae</taxon>
        <taxon>Natronomonas</taxon>
    </lineage>
</organism>
<keyword id="KW-0963">Cytoplasm</keyword>
<keyword id="KW-0324">Glycolysis</keyword>
<keyword id="KW-0456">Lyase</keyword>
<keyword id="KW-0460">Magnesium</keyword>
<keyword id="KW-0479">Metal-binding</keyword>
<keyword id="KW-1185">Reference proteome</keyword>
<keyword id="KW-0964">Secreted</keyword>
<reference key="1">
    <citation type="journal article" date="2005" name="Genome Res.">
        <title>Living with two extremes: conclusions from the genome sequence of Natronomonas pharaonis.</title>
        <authorList>
            <person name="Falb M."/>
            <person name="Pfeiffer F."/>
            <person name="Palm P."/>
            <person name="Rodewald K."/>
            <person name="Hickmann V."/>
            <person name="Tittor J."/>
            <person name="Oesterhelt D."/>
        </authorList>
    </citation>
    <scope>NUCLEOTIDE SEQUENCE [LARGE SCALE GENOMIC DNA]</scope>
    <source>
        <strain>ATCC 35678 / DSM 2160 / CIP 103997 / JCM 8858 / NBRC 14720 / NCIMB 2260 / Gabara</strain>
    </source>
</reference>
<accession>Q3IQT0</accession>
<comment type="function">
    <text evidence="1">Catalyzes the reversible conversion of 2-phosphoglycerate (2-PG) into phosphoenolpyruvate (PEP). It is essential for the degradation of carbohydrates via glycolysis.</text>
</comment>
<comment type="catalytic activity">
    <reaction evidence="1">
        <text>(2R)-2-phosphoglycerate = phosphoenolpyruvate + H2O</text>
        <dbReference type="Rhea" id="RHEA:10164"/>
        <dbReference type="ChEBI" id="CHEBI:15377"/>
        <dbReference type="ChEBI" id="CHEBI:58289"/>
        <dbReference type="ChEBI" id="CHEBI:58702"/>
        <dbReference type="EC" id="4.2.1.11"/>
    </reaction>
</comment>
<comment type="cofactor">
    <cofactor evidence="1">
        <name>Mg(2+)</name>
        <dbReference type="ChEBI" id="CHEBI:18420"/>
    </cofactor>
    <text evidence="1">Binds a second Mg(2+) ion via substrate during catalysis.</text>
</comment>
<comment type="pathway">
    <text evidence="1">Carbohydrate degradation; glycolysis; pyruvate from D-glyceraldehyde 3-phosphate: step 4/5.</text>
</comment>
<comment type="subcellular location">
    <subcellularLocation>
        <location evidence="1">Cytoplasm</location>
    </subcellularLocation>
    <subcellularLocation>
        <location evidence="1">Secreted</location>
    </subcellularLocation>
    <subcellularLocation>
        <location evidence="1">Cell surface</location>
    </subcellularLocation>
    <text evidence="1">Fractions of enolase are present in both the cytoplasm and on the cell surface.</text>
</comment>
<comment type="similarity">
    <text evidence="1">Belongs to the enolase family.</text>
</comment>
<evidence type="ECO:0000255" key="1">
    <source>
        <dbReference type="HAMAP-Rule" id="MF_00318"/>
    </source>
</evidence>
<gene>
    <name evidence="1" type="primary">eno</name>
    <name type="ordered locus">NP_2846A</name>
</gene>
<proteinExistence type="inferred from homology"/>